<feature type="chain" id="PRO_0000408011" description="Transcriptional regulatory protein EDS1">
    <location>
        <begin position="1"/>
        <end position="919"/>
    </location>
</feature>
<feature type="DNA-binding region" description="Zn(2)-C6 fungal-type" evidence="2">
    <location>
        <begin position="56"/>
        <end position="85"/>
    </location>
</feature>
<feature type="region of interest" description="Disordered" evidence="3">
    <location>
        <begin position="1"/>
        <end position="54"/>
    </location>
</feature>
<feature type="region of interest" description="Disordered" evidence="3">
    <location>
        <begin position="297"/>
        <end position="338"/>
    </location>
</feature>
<feature type="compositionally biased region" description="Polar residues" evidence="3">
    <location>
        <begin position="23"/>
        <end position="36"/>
    </location>
</feature>
<feature type="compositionally biased region" description="Basic and acidic residues" evidence="3">
    <location>
        <begin position="37"/>
        <end position="46"/>
    </location>
</feature>
<feature type="compositionally biased region" description="Basic and acidic residues" evidence="3">
    <location>
        <begin position="304"/>
        <end position="317"/>
    </location>
</feature>
<feature type="compositionally biased region" description="Polar residues" evidence="3">
    <location>
        <begin position="318"/>
        <end position="338"/>
    </location>
</feature>
<protein>
    <recommendedName>
        <fullName>Transcriptional regulatory protein EDS1</fullName>
    </recommendedName>
    <alternativeName>
        <fullName>Expression dependent on SLT2 protein 1</fullName>
    </alternativeName>
</protein>
<accession>D3UEC9</accession>
<organism>
    <name type="scientific">Saccharomyces cerevisiae (strain Lalvin EC1118 / Prise de mousse)</name>
    <name type="common">Baker's yeast</name>
    <dbReference type="NCBI Taxonomy" id="643680"/>
    <lineage>
        <taxon>Eukaryota</taxon>
        <taxon>Fungi</taxon>
        <taxon>Dikarya</taxon>
        <taxon>Ascomycota</taxon>
        <taxon>Saccharomycotina</taxon>
        <taxon>Saccharomycetes</taxon>
        <taxon>Saccharomycetales</taxon>
        <taxon>Saccharomycetaceae</taxon>
        <taxon>Saccharomyces</taxon>
    </lineage>
</organism>
<sequence length="919" mass="103329">MSHHVPNLYGTPIRDPHEHKRNSASMGEVNQSVSSRNCERGSEKGTKQRKKASRACDQCRRKRIKCRFDKHTGVCQGCLEVGEKCQFIRVPLKRGPAKKRASVASNEKFSSDNDPLQYRPRTHSYPMNSGNNYLPSLARNSSFPSISSLFVPSITAQSQQFVKVPYDDIKRRSSLATLGSDSSISTEFGGNYRLDENLNVRQEGKDIVAKGMITPVEEMGACSSNVRRQGSQSLPIQEQRASPYINPFISGRSRLSSLSYTSEATTSEGNTQGKNQCMLTPNSVRSIEKERLNSLTAGCPNKKLGTDGRSDKWDKNSTWKPVYRSSNPSHPSTEKNVSLNQEASAKPLMLGTYRQFDATSFYKVLGIYYNFFHINFPVIPINKSKFTDMLDPEKPNVIDEIRQINNEIIQCFKTALEVLVFCKIKQRRSSKSTKSWSRDSLCDFQKGLYYIQNFNKCIADCFQSLITIKPVLKQNSSVIPSRIKFIYFSTIIVLNFILILAGEESSLLLGPSVGVFNEFQAHKLFLPFENTSPMLLLNSNEESGDEILDYAVLFKRLYILLNILDTLQSFRLGQPKLINLNFGSAIETYFSDKTGHNQVVEKAPVALDNILRNLKLGEFITYFVLNRKSLQVNVPHHLLFTNQTDYGEFAVEKGEHDNIAGKFETLLKKKEILIRKLLNIEQKNDHILENCCNSDAEMKNIGELVCSMITLVSGILDSITNMNAENSVDLDSKPLPNAYFAQDSEEELMSPTQSITSNLASEENTRCTTKDLMGTVSIFMLPMVEECYNIISLIGPIPTTLISLYIRNGNMAKGINDRIMTLSTALNELVQITALFNTLEPFRKNAHDRAKRYYVSATSSTGCYESVMKSMYSGKCAASNASNVAPSEEENKKILKKFADIGWKLMDDSELGCCCCFFN</sequence>
<keyword id="KW-0238">DNA-binding</keyword>
<keyword id="KW-0479">Metal-binding</keyword>
<keyword id="KW-0539">Nucleus</keyword>
<keyword id="KW-0804">Transcription</keyword>
<keyword id="KW-0805">Transcription regulation</keyword>
<keyword id="KW-0862">Zinc</keyword>
<evidence type="ECO:0000250" key="1"/>
<evidence type="ECO:0000255" key="2">
    <source>
        <dbReference type="PROSITE-ProRule" id="PRU00227"/>
    </source>
</evidence>
<evidence type="ECO:0000256" key="3">
    <source>
        <dbReference type="SAM" id="MobiDB-lite"/>
    </source>
</evidence>
<evidence type="ECO:0000305" key="4"/>
<dbReference type="EMBL" id="FN393060">
    <property type="protein sequence ID" value="CBK39109.1"/>
    <property type="molecule type" value="Genomic_DNA"/>
</dbReference>
<dbReference type="HOGENOM" id="CLU_006525_0_0_1"/>
<dbReference type="OrthoDB" id="17432at4893"/>
<dbReference type="Proteomes" id="UP000000286">
    <property type="component" value="Chromosome II, Scaffold EC1118_1B15"/>
</dbReference>
<dbReference type="GO" id="GO:0005634">
    <property type="term" value="C:nucleus"/>
    <property type="evidence" value="ECO:0007669"/>
    <property type="project" value="UniProtKB-SubCell"/>
</dbReference>
<dbReference type="GO" id="GO:0003677">
    <property type="term" value="F:DNA binding"/>
    <property type="evidence" value="ECO:0007669"/>
    <property type="project" value="UniProtKB-KW"/>
</dbReference>
<dbReference type="GO" id="GO:0000981">
    <property type="term" value="F:DNA-binding transcription factor activity, RNA polymerase II-specific"/>
    <property type="evidence" value="ECO:0007669"/>
    <property type="project" value="InterPro"/>
</dbReference>
<dbReference type="GO" id="GO:0008270">
    <property type="term" value="F:zinc ion binding"/>
    <property type="evidence" value="ECO:0007669"/>
    <property type="project" value="InterPro"/>
</dbReference>
<dbReference type="CDD" id="cd00067">
    <property type="entry name" value="GAL4"/>
    <property type="match status" value="1"/>
</dbReference>
<dbReference type="Gene3D" id="4.10.240.10">
    <property type="entry name" value="Zn(2)-C6 fungal-type DNA-binding domain"/>
    <property type="match status" value="1"/>
</dbReference>
<dbReference type="InterPro" id="IPR050797">
    <property type="entry name" value="Carb_Metab_Trans_Reg"/>
</dbReference>
<dbReference type="InterPro" id="IPR036864">
    <property type="entry name" value="Zn2-C6_fun-type_DNA-bd_sf"/>
</dbReference>
<dbReference type="InterPro" id="IPR001138">
    <property type="entry name" value="Zn2Cys6_DnaBD"/>
</dbReference>
<dbReference type="PANTHER" id="PTHR31668:SF26">
    <property type="entry name" value="GLUCOSE TRANSPORT TRANSCRIPTION REGULATOR RGT1-RELATED"/>
    <property type="match status" value="1"/>
</dbReference>
<dbReference type="PANTHER" id="PTHR31668">
    <property type="entry name" value="GLUCOSE TRANSPORT TRANSCRIPTION REGULATOR RGT1-RELATED-RELATED"/>
    <property type="match status" value="1"/>
</dbReference>
<dbReference type="Pfam" id="PF00172">
    <property type="entry name" value="Zn_clus"/>
    <property type="match status" value="1"/>
</dbReference>
<dbReference type="SMART" id="SM00066">
    <property type="entry name" value="GAL4"/>
    <property type="match status" value="1"/>
</dbReference>
<dbReference type="SUPFAM" id="SSF57701">
    <property type="entry name" value="Zn2/Cys6 DNA-binding domain"/>
    <property type="match status" value="1"/>
</dbReference>
<dbReference type="PROSITE" id="PS00463">
    <property type="entry name" value="ZN2_CY6_FUNGAL_1"/>
    <property type="match status" value="1"/>
</dbReference>
<dbReference type="PROSITE" id="PS50048">
    <property type="entry name" value="ZN2_CY6_FUNGAL_2"/>
    <property type="match status" value="1"/>
</dbReference>
<comment type="subunit">
    <text evidence="1">Binds DNA in a sequence-specific manner.</text>
</comment>
<comment type="subcellular location">
    <subcellularLocation>
        <location evidence="4">Nucleus</location>
    </subcellularLocation>
</comment>
<proteinExistence type="inferred from homology"/>
<reference key="1">
    <citation type="journal article" date="2009" name="Proc. Natl. Acad. Sci. U.S.A.">
        <title>Eukaryote-to-eukaryote gene transfer events revealed by the genome sequence of the wine yeast Saccharomyces cerevisiae EC1118.</title>
        <authorList>
            <person name="Novo M."/>
            <person name="Bigey F."/>
            <person name="Beyne E."/>
            <person name="Galeote V."/>
            <person name="Gavory F."/>
            <person name="Mallet S."/>
            <person name="Cambon B."/>
            <person name="Legras J.-L."/>
            <person name="Wincker P."/>
            <person name="Casaregola S."/>
            <person name="Dequin S."/>
        </authorList>
    </citation>
    <scope>NUCLEOTIDE SEQUENCE [LARGE SCALE GENOMIC DNA]</scope>
    <source>
        <strain>Lalvin EC1118 / Prise de mousse</strain>
    </source>
</reference>
<gene>
    <name type="primary">EDS1</name>
    <name type="ORF">EC1118_1B15_1640g</name>
</gene>
<name>EDS1_YEAS8</name>